<reference key="1">
    <citation type="journal article" date="1999" name="Nature">
        <title>Sequence and analysis of chromosome 2 of the plant Arabidopsis thaliana.</title>
        <authorList>
            <person name="Lin X."/>
            <person name="Kaul S."/>
            <person name="Rounsley S.D."/>
            <person name="Shea T.P."/>
            <person name="Benito M.-I."/>
            <person name="Town C.D."/>
            <person name="Fujii C.Y."/>
            <person name="Mason T.M."/>
            <person name="Bowman C.L."/>
            <person name="Barnstead M.E."/>
            <person name="Feldblyum T.V."/>
            <person name="Buell C.R."/>
            <person name="Ketchum K.A."/>
            <person name="Lee J.J."/>
            <person name="Ronning C.M."/>
            <person name="Koo H.L."/>
            <person name="Moffat K.S."/>
            <person name="Cronin L.A."/>
            <person name="Shen M."/>
            <person name="Pai G."/>
            <person name="Van Aken S."/>
            <person name="Umayam L."/>
            <person name="Tallon L.J."/>
            <person name="Gill J.E."/>
            <person name="Adams M.D."/>
            <person name="Carrera A.J."/>
            <person name="Creasy T.H."/>
            <person name="Goodman H.M."/>
            <person name="Somerville C.R."/>
            <person name="Copenhaver G.P."/>
            <person name="Preuss D."/>
            <person name="Nierman W.C."/>
            <person name="White O."/>
            <person name="Eisen J.A."/>
            <person name="Salzberg S.L."/>
            <person name="Fraser C.M."/>
            <person name="Venter J.C."/>
        </authorList>
    </citation>
    <scope>NUCLEOTIDE SEQUENCE [LARGE SCALE GENOMIC DNA]</scope>
    <source>
        <strain>cv. Columbia</strain>
    </source>
</reference>
<reference key="2">
    <citation type="journal article" date="2017" name="Plant J.">
        <title>Araport11: a complete reannotation of the Arabidopsis thaliana reference genome.</title>
        <authorList>
            <person name="Cheng C.Y."/>
            <person name="Krishnakumar V."/>
            <person name="Chan A.P."/>
            <person name="Thibaud-Nissen F."/>
            <person name="Schobel S."/>
            <person name="Town C.D."/>
        </authorList>
    </citation>
    <scope>GENOME REANNOTATION</scope>
    <source>
        <strain>cv. Columbia</strain>
    </source>
</reference>
<reference key="3">
    <citation type="journal article" date="2003" name="Science">
        <title>Empirical analysis of transcriptional activity in the Arabidopsis genome.</title>
        <authorList>
            <person name="Yamada K."/>
            <person name="Lim J."/>
            <person name="Dale J.M."/>
            <person name="Chen H."/>
            <person name="Shinn P."/>
            <person name="Palm C.J."/>
            <person name="Southwick A.M."/>
            <person name="Wu H.C."/>
            <person name="Kim C.J."/>
            <person name="Nguyen M."/>
            <person name="Pham P.K."/>
            <person name="Cheuk R.F."/>
            <person name="Karlin-Newmann G."/>
            <person name="Liu S.X."/>
            <person name="Lam B."/>
            <person name="Sakano H."/>
            <person name="Wu T."/>
            <person name="Yu G."/>
            <person name="Miranda M."/>
            <person name="Quach H.L."/>
            <person name="Tripp M."/>
            <person name="Chang C.H."/>
            <person name="Lee J.M."/>
            <person name="Toriumi M.J."/>
            <person name="Chan M.M."/>
            <person name="Tang C.C."/>
            <person name="Onodera C.S."/>
            <person name="Deng J.M."/>
            <person name="Akiyama K."/>
            <person name="Ansari Y."/>
            <person name="Arakawa T."/>
            <person name="Banh J."/>
            <person name="Banno F."/>
            <person name="Bowser L."/>
            <person name="Brooks S.Y."/>
            <person name="Carninci P."/>
            <person name="Chao Q."/>
            <person name="Choy N."/>
            <person name="Enju A."/>
            <person name="Goldsmith A.D."/>
            <person name="Gurjal M."/>
            <person name="Hansen N.F."/>
            <person name="Hayashizaki Y."/>
            <person name="Johnson-Hopson C."/>
            <person name="Hsuan V.W."/>
            <person name="Iida K."/>
            <person name="Karnes M."/>
            <person name="Khan S."/>
            <person name="Koesema E."/>
            <person name="Ishida J."/>
            <person name="Jiang P.X."/>
            <person name="Jones T."/>
            <person name="Kawai J."/>
            <person name="Kamiya A."/>
            <person name="Meyers C."/>
            <person name="Nakajima M."/>
            <person name="Narusaka M."/>
            <person name="Seki M."/>
            <person name="Sakurai T."/>
            <person name="Satou M."/>
            <person name="Tamse R."/>
            <person name="Vaysberg M."/>
            <person name="Wallender E.K."/>
            <person name="Wong C."/>
            <person name="Yamamura Y."/>
            <person name="Yuan S."/>
            <person name="Shinozaki K."/>
            <person name="Davis R.W."/>
            <person name="Theologis A."/>
            <person name="Ecker J.R."/>
        </authorList>
    </citation>
    <scope>NUCLEOTIDE SEQUENCE [LARGE SCALE MRNA]</scope>
    <source>
        <strain>cv. Columbia</strain>
    </source>
</reference>
<reference key="4">
    <citation type="submission" date="2002-03" db="EMBL/GenBank/DDBJ databases">
        <title>Full-length cDNA from Arabidopsis thaliana.</title>
        <authorList>
            <person name="Brover V.V."/>
            <person name="Troukhan M.E."/>
            <person name="Alexandrov N.A."/>
            <person name="Lu Y.-P."/>
            <person name="Flavell R.B."/>
            <person name="Feldmann K.A."/>
        </authorList>
    </citation>
    <scope>NUCLEOTIDE SEQUENCE [LARGE SCALE MRNA]</scope>
</reference>
<reference key="5">
    <citation type="journal article" date="2001" name="J. Biol. Chem.">
        <title>Phylogenetic analysis of the UDP-glycosyltransferase multigene family of Arabidopsis thaliana.</title>
        <authorList>
            <person name="Li Y."/>
            <person name="Baldauf S."/>
            <person name="Lim E.K."/>
            <person name="Bowles D.J."/>
        </authorList>
    </citation>
    <scope>GENE FAMILY</scope>
</reference>
<reference key="6">
    <citation type="journal article" date="2004" name="Biotechnol. Bioeng.">
        <title>Arabidopsis glycosyltransferases as biocatalysts in fermentation for regioselective synthesis of diverse quercetin glucosides.</title>
        <authorList>
            <person name="Lim E.K."/>
            <person name="Ashford D.A."/>
            <person name="Hou B."/>
            <person name="Jackson R.G."/>
            <person name="Bowles D.J."/>
        </authorList>
    </citation>
    <scope>FUNCTION</scope>
</reference>
<feature type="chain" id="PRO_0000409058" description="UDP-glycosyltransferase 71D1">
    <location>
        <begin position="1"/>
        <end position="467"/>
    </location>
</feature>
<feature type="active site" description="Proton acceptor" evidence="1">
    <location>
        <position position="16"/>
    </location>
</feature>
<feature type="active site" description="Charge relay" evidence="1">
    <location>
        <position position="122"/>
    </location>
</feature>
<feature type="binding site" evidence="2">
    <location>
        <position position="16"/>
    </location>
    <ligand>
        <name>an anthocyanidin</name>
        <dbReference type="ChEBI" id="CHEBI:143576"/>
    </ligand>
</feature>
<feature type="binding site" evidence="1">
    <location>
        <position position="144"/>
    </location>
    <ligand>
        <name>UDP-alpha-D-glucose</name>
        <dbReference type="ChEBI" id="CHEBI:58885"/>
    </ligand>
</feature>
<feature type="binding site" evidence="1">
    <location>
        <position position="341"/>
    </location>
    <ligand>
        <name>UDP-alpha-D-glucose</name>
        <dbReference type="ChEBI" id="CHEBI:58885"/>
    </ligand>
</feature>
<feature type="binding site" evidence="1">
    <location>
        <position position="356"/>
    </location>
    <ligand>
        <name>UDP-alpha-D-glucose</name>
        <dbReference type="ChEBI" id="CHEBI:58885"/>
    </ligand>
</feature>
<feature type="binding site" evidence="1">
    <location>
        <position position="359"/>
    </location>
    <ligand>
        <name>UDP-alpha-D-glucose</name>
        <dbReference type="ChEBI" id="CHEBI:58885"/>
    </ligand>
</feature>
<feature type="binding site" evidence="1">
    <location>
        <position position="360"/>
    </location>
    <ligand>
        <name>UDP-alpha-D-glucose</name>
        <dbReference type="ChEBI" id="CHEBI:58885"/>
    </ligand>
</feature>
<feature type="binding site" evidence="1">
    <location>
        <position position="361"/>
    </location>
    <ligand>
        <name>UDP-alpha-D-glucose</name>
        <dbReference type="ChEBI" id="CHEBI:58885"/>
    </ligand>
</feature>
<feature type="binding site" evidence="1">
    <location>
        <position position="364"/>
    </location>
    <ligand>
        <name>UDP-alpha-D-glucose</name>
        <dbReference type="ChEBI" id="CHEBI:58885"/>
    </ligand>
</feature>
<feature type="binding site" evidence="2">
    <location>
        <position position="379"/>
    </location>
    <ligand>
        <name>an anthocyanidin</name>
        <dbReference type="ChEBI" id="CHEBI:143576"/>
    </ligand>
</feature>
<feature type="binding site" evidence="1">
    <location>
        <position position="380"/>
    </location>
    <ligand>
        <name>UDP-alpha-D-glucose</name>
        <dbReference type="ChEBI" id="CHEBI:58885"/>
    </ligand>
</feature>
<feature type="binding site" evidence="1">
    <location>
        <position position="381"/>
    </location>
    <ligand>
        <name>UDP-alpha-D-glucose</name>
        <dbReference type="ChEBI" id="CHEBI:58885"/>
    </ligand>
</feature>
<organism>
    <name type="scientific">Arabidopsis thaliana</name>
    <name type="common">Mouse-ear cress</name>
    <dbReference type="NCBI Taxonomy" id="3702"/>
    <lineage>
        <taxon>Eukaryota</taxon>
        <taxon>Viridiplantae</taxon>
        <taxon>Streptophyta</taxon>
        <taxon>Embryophyta</taxon>
        <taxon>Tracheophyta</taxon>
        <taxon>Spermatophyta</taxon>
        <taxon>Magnoliopsida</taxon>
        <taxon>eudicotyledons</taxon>
        <taxon>Gunneridae</taxon>
        <taxon>Pentapetalae</taxon>
        <taxon>rosids</taxon>
        <taxon>malvids</taxon>
        <taxon>Brassicales</taxon>
        <taxon>Brassicaceae</taxon>
        <taxon>Camelineae</taxon>
        <taxon>Arabidopsis</taxon>
    </lineage>
</organism>
<protein>
    <recommendedName>
        <fullName>UDP-glycosyltransferase 71D1</fullName>
        <ecNumber>2.4.1.-</ecNumber>
    </recommendedName>
    <alternativeName>
        <fullName>Flavonol 3-O-glucosyltransferase UGT71D1</fullName>
        <ecNumber>2.4.1.91</ecNumber>
    </alternativeName>
</protein>
<name>U71D1_ARATH</name>
<evidence type="ECO:0000250" key="1">
    <source>
        <dbReference type="UniProtKB" id="A0A0A1HA03"/>
    </source>
</evidence>
<evidence type="ECO:0000250" key="2">
    <source>
        <dbReference type="UniProtKB" id="P51094"/>
    </source>
</evidence>
<evidence type="ECO:0000269" key="3">
    <source>
    </source>
</evidence>
<evidence type="ECO:0000305" key="4"/>
<gene>
    <name type="primary">UGT71D1</name>
    <name type="ordered locus">At2g29730</name>
    <name type="ORF">T27A16.17</name>
</gene>
<comment type="function">
    <text evidence="3">Possesses quercetin 3-O-glucosyltransferase activity in vitro.</text>
</comment>
<comment type="catalytic activity">
    <reaction>
        <text>a flavonol + UDP-alpha-D-glucose = a flavonol 3-O-beta-D-glucoside + UDP + H(+)</text>
        <dbReference type="Rhea" id="RHEA:22300"/>
        <dbReference type="ChEBI" id="CHEBI:15378"/>
        <dbReference type="ChEBI" id="CHEBI:16816"/>
        <dbReference type="ChEBI" id="CHEBI:28802"/>
        <dbReference type="ChEBI" id="CHEBI:58223"/>
        <dbReference type="ChEBI" id="CHEBI:58885"/>
        <dbReference type="EC" id="2.4.1.91"/>
    </reaction>
</comment>
<comment type="similarity">
    <text evidence="4">Belongs to the UDP-glycosyltransferase family.</text>
</comment>
<proteinExistence type="evidence at transcript level"/>
<dbReference type="EC" id="2.4.1.-"/>
<dbReference type="EC" id="2.4.1.91"/>
<dbReference type="EMBL" id="AC005496">
    <property type="protein sequence ID" value="AAC35239.1"/>
    <property type="molecule type" value="Genomic_DNA"/>
</dbReference>
<dbReference type="EMBL" id="CP002685">
    <property type="protein sequence ID" value="AEC08298.1"/>
    <property type="molecule type" value="Genomic_DNA"/>
</dbReference>
<dbReference type="EMBL" id="AY099557">
    <property type="protein sequence ID" value="AAM20409.1"/>
    <property type="molecule type" value="mRNA"/>
</dbReference>
<dbReference type="EMBL" id="BT006599">
    <property type="protein sequence ID" value="AAP31943.1"/>
    <property type="molecule type" value="mRNA"/>
</dbReference>
<dbReference type="EMBL" id="AY086939">
    <property type="protein sequence ID" value="AAM64503.1"/>
    <property type="molecule type" value="mRNA"/>
</dbReference>
<dbReference type="PIR" id="H84699">
    <property type="entry name" value="H84699"/>
</dbReference>
<dbReference type="RefSeq" id="NP_180534.1">
    <property type="nucleotide sequence ID" value="NM_128527.4"/>
</dbReference>
<dbReference type="SMR" id="O82383"/>
<dbReference type="FunCoup" id="O82383">
    <property type="interactions" value="249"/>
</dbReference>
<dbReference type="STRING" id="3702.O82383"/>
<dbReference type="CAZy" id="GT1">
    <property type="family name" value="Glycosyltransferase Family 1"/>
</dbReference>
<dbReference type="GlyGen" id="O82383">
    <property type="glycosylation" value="1 site"/>
</dbReference>
<dbReference type="PaxDb" id="3702-AT2G29730.1"/>
<dbReference type="ProteomicsDB" id="228642"/>
<dbReference type="DNASU" id="817523"/>
<dbReference type="EnsemblPlants" id="AT2G29730.1">
    <property type="protein sequence ID" value="AT2G29730.1"/>
    <property type="gene ID" value="AT2G29730"/>
</dbReference>
<dbReference type="GeneID" id="817523"/>
<dbReference type="Gramene" id="AT2G29730.1">
    <property type="protein sequence ID" value="AT2G29730.1"/>
    <property type="gene ID" value="AT2G29730"/>
</dbReference>
<dbReference type="KEGG" id="ath:AT2G29730"/>
<dbReference type="Araport" id="AT2G29730"/>
<dbReference type="TAIR" id="AT2G29730">
    <property type="gene designation" value="UGT71D1"/>
</dbReference>
<dbReference type="eggNOG" id="KOG1192">
    <property type="taxonomic scope" value="Eukaryota"/>
</dbReference>
<dbReference type="HOGENOM" id="CLU_001724_3_2_1"/>
<dbReference type="InParanoid" id="O82383"/>
<dbReference type="OMA" id="NQDDRIR"/>
<dbReference type="PhylomeDB" id="O82383"/>
<dbReference type="PRO" id="PR:O82383"/>
<dbReference type="Proteomes" id="UP000006548">
    <property type="component" value="Chromosome 2"/>
</dbReference>
<dbReference type="ExpressionAtlas" id="O82383">
    <property type="expression patterns" value="baseline and differential"/>
</dbReference>
<dbReference type="GO" id="GO:0047893">
    <property type="term" value="F:flavonol 3-O-glucosyltransferase activity"/>
    <property type="evidence" value="ECO:0007669"/>
    <property type="project" value="UniProtKB-EC"/>
</dbReference>
<dbReference type="GO" id="GO:0080043">
    <property type="term" value="F:quercetin 3-O-glucosyltransferase activity"/>
    <property type="evidence" value="ECO:0000314"/>
    <property type="project" value="TAIR"/>
</dbReference>
<dbReference type="CDD" id="cd03784">
    <property type="entry name" value="GT1_Gtf-like"/>
    <property type="match status" value="1"/>
</dbReference>
<dbReference type="FunFam" id="3.40.50.2000:FF:000056">
    <property type="entry name" value="Glycosyltransferase"/>
    <property type="match status" value="1"/>
</dbReference>
<dbReference type="FunFam" id="3.40.50.2000:FF:000080">
    <property type="entry name" value="Glycosyltransferase"/>
    <property type="match status" value="1"/>
</dbReference>
<dbReference type="Gene3D" id="3.40.50.2000">
    <property type="entry name" value="Glycogen Phosphorylase B"/>
    <property type="match status" value="2"/>
</dbReference>
<dbReference type="InterPro" id="IPR050481">
    <property type="entry name" value="UDP-glycosyltransf_plant"/>
</dbReference>
<dbReference type="InterPro" id="IPR002213">
    <property type="entry name" value="UDP_glucos_trans"/>
</dbReference>
<dbReference type="InterPro" id="IPR035595">
    <property type="entry name" value="UDP_glycos_trans_CS"/>
</dbReference>
<dbReference type="PANTHER" id="PTHR48048">
    <property type="entry name" value="GLYCOSYLTRANSFERASE"/>
    <property type="match status" value="1"/>
</dbReference>
<dbReference type="PANTHER" id="PTHR48048:SF45">
    <property type="entry name" value="GLYCOSYLTRANSFERASE"/>
    <property type="match status" value="1"/>
</dbReference>
<dbReference type="Pfam" id="PF00201">
    <property type="entry name" value="UDPGT"/>
    <property type="match status" value="1"/>
</dbReference>
<dbReference type="SUPFAM" id="SSF53756">
    <property type="entry name" value="UDP-Glycosyltransferase/glycogen phosphorylase"/>
    <property type="match status" value="1"/>
</dbReference>
<dbReference type="PROSITE" id="PS00375">
    <property type="entry name" value="UDPGT"/>
    <property type="match status" value="1"/>
</dbReference>
<keyword id="KW-0328">Glycosyltransferase</keyword>
<keyword id="KW-1185">Reference proteome</keyword>
<keyword id="KW-0808">Transferase</keyword>
<accession>O82383</accession>
<sequence length="467" mass="53000">MRNVELIFIPTPTVGHLVPFLEFARRLIEQDDRIRITILLMKLQGQSHLDTYVKSIASSQPFVRFIDVPELEEKPTLGSTQSVEAYVYDVIERNIPLVRNIVMDILTSLALDGVKVKGLVVDFFCLPMIDVAKDISLPFYVFLTTNSGFLAMMQYLADRHSRDTSVFVRNSEEMLSIPGFVNPVPANVLPSALFVEDGYDAYVKLAILFTKANGILVNSSFDIEPYSVNHFLQEQNYPSVYAVGPIFDLKAQPHPEQDLTRRDELMKWLDDQPEASVVFLCFGSMARLRGSLVKEIAHGLELCQYRFLWSLRKEEVTKDDLPEGFLDRVDGRGMICGWSPQVEILAHKAVGGFVSHCGWNSIVESLWFGVPIVTWPMYAEQQLNAFLMVKELKLAVELKLDYRVHSDEIVNANEIETAIRYVMDTDNNVVRKRVMDISQMIQRATKNGGSSFAAIEKFIYDVIGIKP</sequence>